<reference key="1">
    <citation type="journal article" date="1999" name="Nature">
        <title>Sequence and analysis of chromosome 4 of the plant Arabidopsis thaliana.</title>
        <authorList>
            <person name="Mayer K.F.X."/>
            <person name="Schueller C."/>
            <person name="Wambutt R."/>
            <person name="Murphy G."/>
            <person name="Volckaert G."/>
            <person name="Pohl T."/>
            <person name="Duesterhoeft A."/>
            <person name="Stiekema W."/>
            <person name="Entian K.-D."/>
            <person name="Terryn N."/>
            <person name="Harris B."/>
            <person name="Ansorge W."/>
            <person name="Brandt P."/>
            <person name="Grivell L.A."/>
            <person name="Rieger M."/>
            <person name="Weichselgartner M."/>
            <person name="de Simone V."/>
            <person name="Obermaier B."/>
            <person name="Mache R."/>
            <person name="Mueller M."/>
            <person name="Kreis M."/>
            <person name="Delseny M."/>
            <person name="Puigdomenech P."/>
            <person name="Watson M."/>
            <person name="Schmidtheini T."/>
            <person name="Reichert B."/>
            <person name="Portetelle D."/>
            <person name="Perez-Alonso M."/>
            <person name="Boutry M."/>
            <person name="Bancroft I."/>
            <person name="Vos P."/>
            <person name="Hoheisel J."/>
            <person name="Zimmermann W."/>
            <person name="Wedler H."/>
            <person name="Ridley P."/>
            <person name="Langham S.-A."/>
            <person name="McCullagh B."/>
            <person name="Bilham L."/>
            <person name="Robben J."/>
            <person name="van der Schueren J."/>
            <person name="Grymonprez B."/>
            <person name="Chuang Y.-J."/>
            <person name="Vandenbussche F."/>
            <person name="Braeken M."/>
            <person name="Weltjens I."/>
            <person name="Voet M."/>
            <person name="Bastiaens I."/>
            <person name="Aert R."/>
            <person name="Defoor E."/>
            <person name="Weitzenegger T."/>
            <person name="Bothe G."/>
            <person name="Ramsperger U."/>
            <person name="Hilbert H."/>
            <person name="Braun M."/>
            <person name="Holzer E."/>
            <person name="Brandt A."/>
            <person name="Peters S."/>
            <person name="van Staveren M."/>
            <person name="Dirkse W."/>
            <person name="Mooijman P."/>
            <person name="Klein Lankhorst R."/>
            <person name="Rose M."/>
            <person name="Hauf J."/>
            <person name="Koetter P."/>
            <person name="Berneiser S."/>
            <person name="Hempel S."/>
            <person name="Feldpausch M."/>
            <person name="Lamberth S."/>
            <person name="Van den Daele H."/>
            <person name="De Keyser A."/>
            <person name="Buysshaert C."/>
            <person name="Gielen J."/>
            <person name="Villarroel R."/>
            <person name="De Clercq R."/>
            <person name="van Montagu M."/>
            <person name="Rogers J."/>
            <person name="Cronin A."/>
            <person name="Quail M.A."/>
            <person name="Bray-Allen S."/>
            <person name="Clark L."/>
            <person name="Doggett J."/>
            <person name="Hall S."/>
            <person name="Kay M."/>
            <person name="Lennard N."/>
            <person name="McLay K."/>
            <person name="Mayes R."/>
            <person name="Pettett A."/>
            <person name="Rajandream M.A."/>
            <person name="Lyne M."/>
            <person name="Benes V."/>
            <person name="Rechmann S."/>
            <person name="Borkova D."/>
            <person name="Bloecker H."/>
            <person name="Scharfe M."/>
            <person name="Grimm M."/>
            <person name="Loehnert T.-H."/>
            <person name="Dose S."/>
            <person name="de Haan M."/>
            <person name="Maarse A.C."/>
            <person name="Schaefer M."/>
            <person name="Mueller-Auer S."/>
            <person name="Gabel C."/>
            <person name="Fuchs M."/>
            <person name="Fartmann B."/>
            <person name="Granderath K."/>
            <person name="Dauner D."/>
            <person name="Herzl A."/>
            <person name="Neumann S."/>
            <person name="Argiriou A."/>
            <person name="Vitale D."/>
            <person name="Liguori R."/>
            <person name="Piravandi E."/>
            <person name="Massenet O."/>
            <person name="Quigley F."/>
            <person name="Clabauld G."/>
            <person name="Muendlein A."/>
            <person name="Felber R."/>
            <person name="Schnabl S."/>
            <person name="Hiller R."/>
            <person name="Schmidt W."/>
            <person name="Lecharny A."/>
            <person name="Aubourg S."/>
            <person name="Chefdor F."/>
            <person name="Cooke R."/>
            <person name="Berger C."/>
            <person name="Monfort A."/>
            <person name="Casacuberta E."/>
            <person name="Gibbons T."/>
            <person name="Weber N."/>
            <person name="Vandenbol M."/>
            <person name="Bargues M."/>
            <person name="Terol J."/>
            <person name="Torres A."/>
            <person name="Perez-Perez A."/>
            <person name="Purnelle B."/>
            <person name="Bent E."/>
            <person name="Johnson S."/>
            <person name="Tacon D."/>
            <person name="Jesse T."/>
            <person name="Heijnen L."/>
            <person name="Schwarz S."/>
            <person name="Scholler P."/>
            <person name="Heber S."/>
            <person name="Francs P."/>
            <person name="Bielke C."/>
            <person name="Frishman D."/>
            <person name="Haase D."/>
            <person name="Lemcke K."/>
            <person name="Mewes H.-W."/>
            <person name="Stocker S."/>
            <person name="Zaccaria P."/>
            <person name="Bevan M."/>
            <person name="Wilson R.K."/>
            <person name="de la Bastide M."/>
            <person name="Habermann K."/>
            <person name="Parnell L."/>
            <person name="Dedhia N."/>
            <person name="Gnoj L."/>
            <person name="Schutz K."/>
            <person name="Huang E."/>
            <person name="Spiegel L."/>
            <person name="Sekhon M."/>
            <person name="Murray J."/>
            <person name="Sheet P."/>
            <person name="Cordes M."/>
            <person name="Abu-Threideh J."/>
            <person name="Stoneking T."/>
            <person name="Kalicki J."/>
            <person name="Graves T."/>
            <person name="Harmon G."/>
            <person name="Edwards J."/>
            <person name="Latreille P."/>
            <person name="Courtney L."/>
            <person name="Cloud J."/>
            <person name="Abbott A."/>
            <person name="Scott K."/>
            <person name="Johnson D."/>
            <person name="Minx P."/>
            <person name="Bentley D."/>
            <person name="Fulton B."/>
            <person name="Miller N."/>
            <person name="Greco T."/>
            <person name="Kemp K."/>
            <person name="Kramer J."/>
            <person name="Fulton L."/>
            <person name="Mardis E."/>
            <person name="Dante M."/>
            <person name="Pepin K."/>
            <person name="Hillier L.W."/>
            <person name="Nelson J."/>
            <person name="Spieth J."/>
            <person name="Ryan E."/>
            <person name="Andrews S."/>
            <person name="Geisel C."/>
            <person name="Layman D."/>
            <person name="Du H."/>
            <person name="Ali J."/>
            <person name="Berghoff A."/>
            <person name="Jones K."/>
            <person name="Drone K."/>
            <person name="Cotton M."/>
            <person name="Joshu C."/>
            <person name="Antonoiu B."/>
            <person name="Zidanic M."/>
            <person name="Strong C."/>
            <person name="Sun H."/>
            <person name="Lamar B."/>
            <person name="Yordan C."/>
            <person name="Ma P."/>
            <person name="Zhong J."/>
            <person name="Preston R."/>
            <person name="Vil D."/>
            <person name="Shekher M."/>
            <person name="Matero A."/>
            <person name="Shah R."/>
            <person name="Swaby I.K."/>
            <person name="O'Shaughnessy A."/>
            <person name="Rodriguez M."/>
            <person name="Hoffman J."/>
            <person name="Till S."/>
            <person name="Granat S."/>
            <person name="Shohdy N."/>
            <person name="Hasegawa A."/>
            <person name="Hameed A."/>
            <person name="Lodhi M."/>
            <person name="Johnson A."/>
            <person name="Chen E."/>
            <person name="Marra M.A."/>
            <person name="Martienssen R."/>
            <person name="McCombie W.R."/>
        </authorList>
    </citation>
    <scope>NUCLEOTIDE SEQUENCE [LARGE SCALE GENOMIC DNA]</scope>
    <source>
        <strain>cv. Columbia</strain>
    </source>
</reference>
<reference key="2">
    <citation type="journal article" date="2017" name="Plant J.">
        <title>Araport11: a complete reannotation of the Arabidopsis thaliana reference genome.</title>
        <authorList>
            <person name="Cheng C.Y."/>
            <person name="Krishnakumar V."/>
            <person name="Chan A.P."/>
            <person name="Thibaud-Nissen F."/>
            <person name="Schobel S."/>
            <person name="Town C.D."/>
        </authorList>
    </citation>
    <scope>GENOME REANNOTATION</scope>
    <source>
        <strain>cv. Columbia</strain>
    </source>
</reference>
<reference key="3">
    <citation type="journal article" date="2003" name="Science">
        <title>Empirical analysis of transcriptional activity in the Arabidopsis genome.</title>
        <authorList>
            <person name="Yamada K."/>
            <person name="Lim J."/>
            <person name="Dale J.M."/>
            <person name="Chen H."/>
            <person name="Shinn P."/>
            <person name="Palm C.J."/>
            <person name="Southwick A.M."/>
            <person name="Wu H.C."/>
            <person name="Kim C.J."/>
            <person name="Nguyen M."/>
            <person name="Pham P.K."/>
            <person name="Cheuk R.F."/>
            <person name="Karlin-Newmann G."/>
            <person name="Liu S.X."/>
            <person name="Lam B."/>
            <person name="Sakano H."/>
            <person name="Wu T."/>
            <person name="Yu G."/>
            <person name="Miranda M."/>
            <person name="Quach H.L."/>
            <person name="Tripp M."/>
            <person name="Chang C.H."/>
            <person name="Lee J.M."/>
            <person name="Toriumi M.J."/>
            <person name="Chan M.M."/>
            <person name="Tang C.C."/>
            <person name="Onodera C.S."/>
            <person name="Deng J.M."/>
            <person name="Akiyama K."/>
            <person name="Ansari Y."/>
            <person name="Arakawa T."/>
            <person name="Banh J."/>
            <person name="Banno F."/>
            <person name="Bowser L."/>
            <person name="Brooks S.Y."/>
            <person name="Carninci P."/>
            <person name="Chao Q."/>
            <person name="Choy N."/>
            <person name="Enju A."/>
            <person name="Goldsmith A.D."/>
            <person name="Gurjal M."/>
            <person name="Hansen N.F."/>
            <person name="Hayashizaki Y."/>
            <person name="Johnson-Hopson C."/>
            <person name="Hsuan V.W."/>
            <person name="Iida K."/>
            <person name="Karnes M."/>
            <person name="Khan S."/>
            <person name="Koesema E."/>
            <person name="Ishida J."/>
            <person name="Jiang P.X."/>
            <person name="Jones T."/>
            <person name="Kawai J."/>
            <person name="Kamiya A."/>
            <person name="Meyers C."/>
            <person name="Nakajima M."/>
            <person name="Narusaka M."/>
            <person name="Seki M."/>
            <person name="Sakurai T."/>
            <person name="Satou M."/>
            <person name="Tamse R."/>
            <person name="Vaysberg M."/>
            <person name="Wallender E.K."/>
            <person name="Wong C."/>
            <person name="Yamamura Y."/>
            <person name="Yuan S."/>
            <person name="Shinozaki K."/>
            <person name="Davis R.W."/>
            <person name="Theologis A."/>
            <person name="Ecker J.R."/>
        </authorList>
    </citation>
    <scope>NUCLEOTIDE SEQUENCE [LARGE SCALE MRNA]</scope>
    <source>
        <strain>cv. Columbia</strain>
    </source>
</reference>
<reference key="4">
    <citation type="submission" date="2002-03" db="EMBL/GenBank/DDBJ databases">
        <title>Full-length cDNA from Arabidopsis thaliana.</title>
        <authorList>
            <person name="Brover V.V."/>
            <person name="Troukhan M.E."/>
            <person name="Alexandrov N.A."/>
            <person name="Lu Y.-P."/>
            <person name="Flavell R.B."/>
            <person name="Feldmann K.A."/>
        </authorList>
    </citation>
    <scope>NUCLEOTIDE SEQUENCE [LARGE SCALE MRNA]</scope>
</reference>
<reference key="5">
    <citation type="journal article" date="2002" name="Trends Plant Sci.">
        <title>A simple nomenclature for a complex proton pump: VHA genes encode the vacuolar H(+)-ATPase.</title>
        <authorList>
            <person name="Sze H."/>
            <person name="Schumacher K."/>
            <person name="Mueller M.L."/>
            <person name="Padmanaban S."/>
            <person name="Taiz L."/>
        </authorList>
    </citation>
    <scope>GENE FAMILY</scope>
    <scope>NOMENCLATURE</scope>
</reference>
<organism>
    <name type="scientific">Arabidopsis thaliana</name>
    <name type="common">Mouse-ear cress</name>
    <dbReference type="NCBI Taxonomy" id="3702"/>
    <lineage>
        <taxon>Eukaryota</taxon>
        <taxon>Viridiplantae</taxon>
        <taxon>Streptophyta</taxon>
        <taxon>Embryophyta</taxon>
        <taxon>Tracheophyta</taxon>
        <taxon>Spermatophyta</taxon>
        <taxon>Magnoliopsida</taxon>
        <taxon>eudicotyledons</taxon>
        <taxon>Gunneridae</taxon>
        <taxon>Pentapetalae</taxon>
        <taxon>rosids</taxon>
        <taxon>malvids</taxon>
        <taxon>Brassicales</taxon>
        <taxon>Brassicaceae</taxon>
        <taxon>Camelineae</taxon>
        <taxon>Arabidopsis</taxon>
    </lineage>
</organism>
<protein>
    <recommendedName>
        <fullName>V-type proton ATPase subunit F</fullName>
        <shortName>V-ATPase subunit F</shortName>
    </recommendedName>
    <alternativeName>
        <fullName>V-ATPase 14 kDa subunit</fullName>
    </alternativeName>
    <alternativeName>
        <fullName>Vacuolar H(+)-ATPase subunit F</fullName>
    </alternativeName>
    <alternativeName>
        <fullName>Vacuolar proton pump subunit F</fullName>
    </alternativeName>
</protein>
<name>VATF_ARATH</name>
<gene>
    <name type="primary">VHA-F</name>
    <name type="synonym">VATF</name>
    <name type="ordered locus">At4g02620</name>
    <name type="ORF">T10P11.25</name>
</gene>
<sequence>MAGRATIPARNSALIAMIADEDTVVGFLMAGVGNVDIRRKTNYLIVDSKTTVRQIEDAFKEFSARDDIAIILLSQYIANMIRFLVDSYNKPVPAILEIPSKDHPYDPAHDSVLSRVKYLFSAESVSQR</sequence>
<dbReference type="EMBL" id="AC002330">
    <property type="protein sequence ID" value="AAC78269.1"/>
    <property type="molecule type" value="Genomic_DNA"/>
</dbReference>
<dbReference type="EMBL" id="AL161494">
    <property type="protein sequence ID" value="CAB80755.1"/>
    <property type="molecule type" value="Genomic_DNA"/>
</dbReference>
<dbReference type="EMBL" id="CP002687">
    <property type="protein sequence ID" value="AEE82205.1"/>
    <property type="molecule type" value="Genomic_DNA"/>
</dbReference>
<dbReference type="EMBL" id="AY065277">
    <property type="protein sequence ID" value="AAL38753.1"/>
    <property type="molecule type" value="mRNA"/>
</dbReference>
<dbReference type="EMBL" id="AY117236">
    <property type="protein sequence ID" value="AAM51311.1"/>
    <property type="molecule type" value="mRNA"/>
</dbReference>
<dbReference type="EMBL" id="AY084277">
    <property type="protein sequence ID" value="AAM60868.1"/>
    <property type="molecule type" value="mRNA"/>
</dbReference>
<dbReference type="PIR" id="T01087">
    <property type="entry name" value="T01087"/>
</dbReference>
<dbReference type="RefSeq" id="NP_192171.1">
    <property type="nucleotide sequence ID" value="NM_116496.4"/>
</dbReference>
<dbReference type="SMR" id="Q9ZQX4"/>
<dbReference type="BioGRID" id="13510">
    <property type="interactions" value="4"/>
</dbReference>
<dbReference type="FunCoup" id="Q9ZQX4">
    <property type="interactions" value="4124"/>
</dbReference>
<dbReference type="IntAct" id="Q9ZQX4">
    <property type="interactions" value="3"/>
</dbReference>
<dbReference type="STRING" id="3702.Q9ZQX4"/>
<dbReference type="TCDB" id="3.A.2.2.5">
    <property type="family name" value="the h+- or na+-translocating f-type, v-type and a-type atpase (f-atpase) superfamily"/>
</dbReference>
<dbReference type="iPTMnet" id="Q9ZQX4"/>
<dbReference type="PaxDb" id="3702-AT4G02620.1"/>
<dbReference type="ProteomicsDB" id="228530"/>
<dbReference type="EnsemblPlants" id="AT4G02620.1">
    <property type="protein sequence ID" value="AT4G02620.1"/>
    <property type="gene ID" value="AT4G02620"/>
</dbReference>
<dbReference type="GeneID" id="828221"/>
<dbReference type="Gramene" id="AT4G02620.1">
    <property type="protein sequence ID" value="AT4G02620.1"/>
    <property type="gene ID" value="AT4G02620"/>
</dbReference>
<dbReference type="KEGG" id="ath:AT4G02620"/>
<dbReference type="Araport" id="AT4G02620"/>
<dbReference type="TAIR" id="AT4G02620"/>
<dbReference type="eggNOG" id="KOG3432">
    <property type="taxonomic scope" value="Eukaryota"/>
</dbReference>
<dbReference type="HOGENOM" id="CLU_135754_0_0_1"/>
<dbReference type="InParanoid" id="Q9ZQX4"/>
<dbReference type="OMA" id="IIICQHI"/>
<dbReference type="OrthoDB" id="1046865at2759"/>
<dbReference type="PhylomeDB" id="Q9ZQX4"/>
<dbReference type="PRO" id="PR:Q9ZQX4"/>
<dbReference type="Proteomes" id="UP000006548">
    <property type="component" value="Chromosome 4"/>
</dbReference>
<dbReference type="ExpressionAtlas" id="Q9ZQX4">
    <property type="expression patterns" value="baseline and differential"/>
</dbReference>
<dbReference type="GO" id="GO:0005829">
    <property type="term" value="C:cytosol"/>
    <property type="evidence" value="ECO:0007005"/>
    <property type="project" value="TAIR"/>
</dbReference>
<dbReference type="GO" id="GO:0005794">
    <property type="term" value="C:Golgi apparatus"/>
    <property type="evidence" value="ECO:0007005"/>
    <property type="project" value="TAIR"/>
</dbReference>
<dbReference type="GO" id="GO:0000325">
    <property type="term" value="C:plant-type vacuole"/>
    <property type="evidence" value="ECO:0007005"/>
    <property type="project" value="TAIR"/>
</dbReference>
<dbReference type="GO" id="GO:0005886">
    <property type="term" value="C:plasma membrane"/>
    <property type="evidence" value="ECO:0007005"/>
    <property type="project" value="TAIR"/>
</dbReference>
<dbReference type="GO" id="GO:0033180">
    <property type="term" value="C:proton-transporting V-type ATPase, V1 domain"/>
    <property type="evidence" value="ECO:0007669"/>
    <property type="project" value="InterPro"/>
</dbReference>
<dbReference type="GO" id="GO:0005774">
    <property type="term" value="C:vacuolar membrane"/>
    <property type="evidence" value="ECO:0007669"/>
    <property type="project" value="UniProtKB-SubCell"/>
</dbReference>
<dbReference type="GO" id="GO:0005773">
    <property type="term" value="C:vacuole"/>
    <property type="evidence" value="ECO:0007005"/>
    <property type="project" value="TAIR"/>
</dbReference>
<dbReference type="GO" id="GO:0046961">
    <property type="term" value="F:proton-transporting ATPase activity, rotational mechanism"/>
    <property type="evidence" value="ECO:0007669"/>
    <property type="project" value="InterPro"/>
</dbReference>
<dbReference type="FunFam" id="3.40.50.10580:FF:000003">
    <property type="entry name" value="V-type proton ATPase subunit F"/>
    <property type="match status" value="1"/>
</dbReference>
<dbReference type="Gene3D" id="3.40.50.10580">
    <property type="entry name" value="ATPase, V1 complex, subunit F"/>
    <property type="match status" value="1"/>
</dbReference>
<dbReference type="InterPro" id="IPR008218">
    <property type="entry name" value="ATPase_V1-cplx_f_g_su"/>
</dbReference>
<dbReference type="InterPro" id="IPR005772">
    <property type="entry name" value="ATPase_V1-cplx_fsu_euk"/>
</dbReference>
<dbReference type="InterPro" id="IPR036906">
    <property type="entry name" value="ATPase_V1_fsu_sf"/>
</dbReference>
<dbReference type="NCBIfam" id="TIGR01101">
    <property type="entry name" value="V_ATP_synt_F"/>
    <property type="match status" value="1"/>
</dbReference>
<dbReference type="PANTHER" id="PTHR13861:SF2">
    <property type="entry name" value="V-TYPE PROTON ATPASE SUBUNIT F"/>
    <property type="match status" value="1"/>
</dbReference>
<dbReference type="PANTHER" id="PTHR13861">
    <property type="entry name" value="VACUOLAR ATP SYNTHASE SUBUNIT F"/>
    <property type="match status" value="1"/>
</dbReference>
<dbReference type="Pfam" id="PF01990">
    <property type="entry name" value="ATP-synt_F"/>
    <property type="match status" value="1"/>
</dbReference>
<dbReference type="PIRSF" id="PIRSF015945">
    <property type="entry name" value="ATPase_V1_F_euk"/>
    <property type="match status" value="1"/>
</dbReference>
<dbReference type="SUPFAM" id="SSF159468">
    <property type="entry name" value="AtpF-like"/>
    <property type="match status" value="1"/>
</dbReference>
<feature type="chain" id="PRO_0000144809" description="V-type proton ATPase subunit F">
    <location>
        <begin position="1"/>
        <end position="128"/>
    </location>
</feature>
<accession>Q9ZQX4</accession>
<comment type="function">
    <text evidence="1">Subunit of the peripheral V1 complex of vacuolar ATPase essential for assembly or catalytic function. V-ATPase is responsible for acidifying a variety of intracellular compartments in eukaryotic cells (By similarity).</text>
</comment>
<comment type="subunit">
    <text>V-ATPase is a heteromultimeric enzyme composed of a peripheral catalytic V1 complex (components A to H) attached to an integral membrane V0 proton pore complex (components: a, c, c'', d and e).</text>
</comment>
<comment type="subcellular location">
    <subcellularLocation>
        <location evidence="2">Vacuole membrane</location>
        <topology evidence="2">Peripheral membrane protein</topology>
    </subcellularLocation>
</comment>
<comment type="similarity">
    <text evidence="2">Belongs to the V-ATPase F subunit family.</text>
</comment>
<keyword id="KW-0375">Hydrogen ion transport</keyword>
<keyword id="KW-0406">Ion transport</keyword>
<keyword id="KW-0472">Membrane</keyword>
<keyword id="KW-1185">Reference proteome</keyword>
<keyword id="KW-0813">Transport</keyword>
<keyword id="KW-0926">Vacuole</keyword>
<evidence type="ECO:0000250" key="1"/>
<evidence type="ECO:0000305" key="2"/>
<proteinExistence type="evidence at transcript level"/>